<reference key="1">
    <citation type="journal article" date="2009" name="J. Bacteriol.">
        <title>The complete genome sequence of Helicobacter pylori strain G27.</title>
        <authorList>
            <person name="Baltrus D.A."/>
            <person name="Amieva M.R."/>
            <person name="Covacci A."/>
            <person name="Lowe T.M."/>
            <person name="Merrell D.S."/>
            <person name="Ottemann K.M."/>
            <person name="Stein M."/>
            <person name="Salama N.R."/>
            <person name="Guillemin K."/>
        </authorList>
    </citation>
    <scope>NUCLEOTIDE SEQUENCE [LARGE SCALE GENOMIC DNA]</scope>
    <source>
        <strain>G27</strain>
    </source>
</reference>
<feature type="chain" id="PRO_1000096973" description="3-methyl-2-oxobutanoate hydroxymethyltransferase">
    <location>
        <begin position="1"/>
        <end position="270"/>
    </location>
</feature>
<feature type="active site" description="Proton acceptor" evidence="1">
    <location>
        <position position="187"/>
    </location>
</feature>
<feature type="binding site" evidence="1">
    <location>
        <begin position="50"/>
        <end position="51"/>
    </location>
    <ligand>
        <name>3-methyl-2-oxobutanoate</name>
        <dbReference type="ChEBI" id="CHEBI:11851"/>
    </ligand>
</feature>
<feature type="binding site" evidence="1">
    <location>
        <position position="50"/>
    </location>
    <ligand>
        <name>Mg(2+)</name>
        <dbReference type="ChEBI" id="CHEBI:18420"/>
    </ligand>
</feature>
<feature type="binding site" evidence="1">
    <location>
        <position position="89"/>
    </location>
    <ligand>
        <name>3-methyl-2-oxobutanoate</name>
        <dbReference type="ChEBI" id="CHEBI:11851"/>
    </ligand>
</feature>
<feature type="binding site" evidence="1">
    <location>
        <position position="89"/>
    </location>
    <ligand>
        <name>Mg(2+)</name>
        <dbReference type="ChEBI" id="CHEBI:18420"/>
    </ligand>
</feature>
<feature type="binding site" evidence="1">
    <location>
        <position position="118"/>
    </location>
    <ligand>
        <name>3-methyl-2-oxobutanoate</name>
        <dbReference type="ChEBI" id="CHEBI:11851"/>
    </ligand>
</feature>
<feature type="binding site" evidence="1">
    <location>
        <position position="120"/>
    </location>
    <ligand>
        <name>Mg(2+)</name>
        <dbReference type="ChEBI" id="CHEBI:18420"/>
    </ligand>
</feature>
<evidence type="ECO:0000255" key="1">
    <source>
        <dbReference type="HAMAP-Rule" id="MF_00156"/>
    </source>
</evidence>
<protein>
    <recommendedName>
        <fullName evidence="1">3-methyl-2-oxobutanoate hydroxymethyltransferase</fullName>
        <ecNumber evidence="1">2.1.2.11</ecNumber>
    </recommendedName>
    <alternativeName>
        <fullName evidence="1">Ketopantoate hydroxymethyltransferase</fullName>
        <shortName evidence="1">KPHMT</shortName>
    </alternativeName>
</protein>
<dbReference type="EC" id="2.1.2.11" evidence="1"/>
<dbReference type="EMBL" id="CP001173">
    <property type="protein sequence ID" value="ACI27136.1"/>
    <property type="molecule type" value="Genomic_DNA"/>
</dbReference>
<dbReference type="RefSeq" id="WP_000062757.1">
    <property type="nucleotide sequence ID" value="NC_011333.1"/>
</dbReference>
<dbReference type="SMR" id="B5ZAF6"/>
<dbReference type="KEGG" id="hpg:HPG27_370"/>
<dbReference type="HOGENOM" id="CLU_036645_1_0_7"/>
<dbReference type="UniPathway" id="UPA00028">
    <property type="reaction ID" value="UER00003"/>
</dbReference>
<dbReference type="Proteomes" id="UP000001735">
    <property type="component" value="Chromosome"/>
</dbReference>
<dbReference type="GO" id="GO:0005737">
    <property type="term" value="C:cytoplasm"/>
    <property type="evidence" value="ECO:0007669"/>
    <property type="project" value="UniProtKB-SubCell"/>
</dbReference>
<dbReference type="GO" id="GO:0003864">
    <property type="term" value="F:3-methyl-2-oxobutanoate hydroxymethyltransferase activity"/>
    <property type="evidence" value="ECO:0007669"/>
    <property type="project" value="UniProtKB-UniRule"/>
</dbReference>
<dbReference type="GO" id="GO:0000287">
    <property type="term" value="F:magnesium ion binding"/>
    <property type="evidence" value="ECO:0007669"/>
    <property type="project" value="TreeGrafter"/>
</dbReference>
<dbReference type="GO" id="GO:0015940">
    <property type="term" value="P:pantothenate biosynthetic process"/>
    <property type="evidence" value="ECO:0007669"/>
    <property type="project" value="UniProtKB-UniRule"/>
</dbReference>
<dbReference type="CDD" id="cd06557">
    <property type="entry name" value="KPHMT-like"/>
    <property type="match status" value="1"/>
</dbReference>
<dbReference type="FunFam" id="3.20.20.60:FF:000041">
    <property type="entry name" value="3-methyl-2-oxobutanoate hydroxymethyltransferase"/>
    <property type="match status" value="1"/>
</dbReference>
<dbReference type="Gene3D" id="3.20.20.60">
    <property type="entry name" value="Phosphoenolpyruvate-binding domains"/>
    <property type="match status" value="1"/>
</dbReference>
<dbReference type="HAMAP" id="MF_00156">
    <property type="entry name" value="PanB"/>
    <property type="match status" value="1"/>
</dbReference>
<dbReference type="InterPro" id="IPR003700">
    <property type="entry name" value="Pantoate_hydroxy_MeTrfase"/>
</dbReference>
<dbReference type="InterPro" id="IPR015813">
    <property type="entry name" value="Pyrv/PenolPyrv_kinase-like_dom"/>
</dbReference>
<dbReference type="InterPro" id="IPR040442">
    <property type="entry name" value="Pyrv_kinase-like_dom_sf"/>
</dbReference>
<dbReference type="NCBIfam" id="TIGR00222">
    <property type="entry name" value="panB"/>
    <property type="match status" value="1"/>
</dbReference>
<dbReference type="NCBIfam" id="NF001452">
    <property type="entry name" value="PRK00311.1"/>
    <property type="match status" value="1"/>
</dbReference>
<dbReference type="PANTHER" id="PTHR20881">
    <property type="entry name" value="3-METHYL-2-OXOBUTANOATE HYDROXYMETHYLTRANSFERASE"/>
    <property type="match status" value="1"/>
</dbReference>
<dbReference type="PANTHER" id="PTHR20881:SF0">
    <property type="entry name" value="3-METHYL-2-OXOBUTANOATE HYDROXYMETHYLTRANSFERASE"/>
    <property type="match status" value="1"/>
</dbReference>
<dbReference type="Pfam" id="PF02548">
    <property type="entry name" value="Pantoate_transf"/>
    <property type="match status" value="1"/>
</dbReference>
<dbReference type="PIRSF" id="PIRSF000388">
    <property type="entry name" value="Pantoate_hydroxy_MeTrfase"/>
    <property type="match status" value="1"/>
</dbReference>
<dbReference type="SUPFAM" id="SSF51621">
    <property type="entry name" value="Phosphoenolpyruvate/pyruvate domain"/>
    <property type="match status" value="1"/>
</dbReference>
<name>PANB_HELPG</name>
<comment type="function">
    <text evidence="1">Catalyzes the reversible reaction in which hydroxymethyl group from 5,10-methylenetetrahydrofolate is transferred onto alpha-ketoisovalerate to form ketopantoate.</text>
</comment>
<comment type="catalytic activity">
    <reaction evidence="1">
        <text>3-methyl-2-oxobutanoate + (6R)-5,10-methylene-5,6,7,8-tetrahydrofolate + H2O = 2-dehydropantoate + (6S)-5,6,7,8-tetrahydrofolate</text>
        <dbReference type="Rhea" id="RHEA:11824"/>
        <dbReference type="ChEBI" id="CHEBI:11561"/>
        <dbReference type="ChEBI" id="CHEBI:11851"/>
        <dbReference type="ChEBI" id="CHEBI:15377"/>
        <dbReference type="ChEBI" id="CHEBI:15636"/>
        <dbReference type="ChEBI" id="CHEBI:57453"/>
        <dbReference type="EC" id="2.1.2.11"/>
    </reaction>
</comment>
<comment type="cofactor">
    <cofactor evidence="1">
        <name>Mg(2+)</name>
        <dbReference type="ChEBI" id="CHEBI:18420"/>
    </cofactor>
    <text evidence="1">Binds 1 Mg(2+) ion per subunit.</text>
</comment>
<comment type="pathway">
    <text evidence="1">Cofactor biosynthesis; (R)-pantothenate biosynthesis; (R)-pantoate from 3-methyl-2-oxobutanoate: step 1/2.</text>
</comment>
<comment type="subunit">
    <text evidence="1">Homodecamer; pentamer of dimers.</text>
</comment>
<comment type="subcellular location">
    <subcellularLocation>
        <location evidence="1">Cytoplasm</location>
    </subcellularLocation>
</comment>
<comment type="similarity">
    <text evidence="1">Belongs to the PanB family.</text>
</comment>
<accession>B5ZAF6</accession>
<gene>
    <name evidence="1" type="primary">panB</name>
    <name type="ordered locus">HPG27_370</name>
</gene>
<organism>
    <name type="scientific">Helicobacter pylori (strain G27)</name>
    <dbReference type="NCBI Taxonomy" id="563041"/>
    <lineage>
        <taxon>Bacteria</taxon>
        <taxon>Pseudomonadati</taxon>
        <taxon>Campylobacterota</taxon>
        <taxon>Epsilonproteobacteria</taxon>
        <taxon>Campylobacterales</taxon>
        <taxon>Helicobacteraceae</taxon>
        <taxon>Helicobacter</taxon>
    </lineage>
</organism>
<keyword id="KW-0963">Cytoplasm</keyword>
<keyword id="KW-0460">Magnesium</keyword>
<keyword id="KW-0479">Metal-binding</keyword>
<keyword id="KW-0566">Pantothenate biosynthesis</keyword>
<keyword id="KW-1185">Reference proteome</keyword>
<keyword id="KW-0808">Transferase</keyword>
<sequence length="270" mass="29867">MSMQTAPIKKTTLNHLQAKKNQEKIIAITAYDALFAQIFDPLVDVILVGDSLNMSFFNQNDTLSASVEMMLYHTKAVCAGAKTPFIITDMPFGSYKDEKTALKNAIRVYKETQASAIKLEGGKEKAKLVKTLTNEGVIVVGHIGLMPQFVRLDGGYKIKGKNEEQQKKLLEDALSLEEAGVGLLVLEGITTPIAQTITQKIKIPTIGIGSGKDCDGQILVWSDMLGFFDSFKPKFVREYLKGKELVQNAIKQYADDVKKGNFPNELESYH</sequence>
<proteinExistence type="inferred from homology"/>